<sequence>MKFVDEAEIQVIAGNGGDGCVSFRREKFIPLGGPDGGDGGDGGSVWLVADENLNTLVDFRHERIFKAQRGVNGMGQQMYGKAGQDKIISVPIGTVVINVQTDEVIGDMVRHGDRLLVAKGGTGGLGNMHFKSSINRAPRQARPGEQGEERTLKLELKLLADIGMLGFPNVGKSTFIRAVSAATPKVADYPFTTLYPNLGVVKIEAYSSFVIADVPGLIEGAADGVGLGMQFLRHLQRTKLLLHMVDISATADAYGNEKVGVGLLPIEQVRKLEIELERHDPALLDKPRWLVLNKADLMPQEEAQALAEALIAELRWTAPWYLVSAVSREGTWPIMKSAMTLFEHQREVAAEQRVSSR</sequence>
<reference key="1">
    <citation type="journal article" date="2010" name="J. Bacteriol.">
        <title>Whole genome sequences of two Xylella fastidiosa strains (M12 and M23) causing almond leaf scorch disease in California.</title>
        <authorList>
            <person name="Chen J."/>
            <person name="Xie G."/>
            <person name="Han S."/>
            <person name="Chertkov O."/>
            <person name="Sims D."/>
            <person name="Civerolo E.L."/>
        </authorList>
    </citation>
    <scope>NUCLEOTIDE SEQUENCE [LARGE SCALE GENOMIC DNA]</scope>
    <source>
        <strain>M23</strain>
    </source>
</reference>
<name>OBG_XYLF2</name>
<gene>
    <name evidence="1" type="primary">obg</name>
    <name type="ordered locus">XfasM23_1525</name>
</gene>
<feature type="chain" id="PRO_0000386403" description="GTPase Obg">
    <location>
        <begin position="1"/>
        <end position="357"/>
    </location>
</feature>
<feature type="domain" description="Obg" evidence="2">
    <location>
        <begin position="1"/>
        <end position="159"/>
    </location>
</feature>
<feature type="domain" description="OBG-type G" evidence="1">
    <location>
        <begin position="160"/>
        <end position="343"/>
    </location>
</feature>
<feature type="binding site" evidence="1">
    <location>
        <begin position="166"/>
        <end position="173"/>
    </location>
    <ligand>
        <name>GTP</name>
        <dbReference type="ChEBI" id="CHEBI:37565"/>
    </ligand>
</feature>
<feature type="binding site" evidence="1">
    <location>
        <position position="173"/>
    </location>
    <ligand>
        <name>Mg(2+)</name>
        <dbReference type="ChEBI" id="CHEBI:18420"/>
    </ligand>
</feature>
<feature type="binding site" evidence="1">
    <location>
        <begin position="191"/>
        <end position="195"/>
    </location>
    <ligand>
        <name>GTP</name>
        <dbReference type="ChEBI" id="CHEBI:37565"/>
    </ligand>
</feature>
<feature type="binding site" evidence="1">
    <location>
        <position position="193"/>
    </location>
    <ligand>
        <name>Mg(2+)</name>
        <dbReference type="ChEBI" id="CHEBI:18420"/>
    </ligand>
</feature>
<feature type="binding site" evidence="1">
    <location>
        <begin position="213"/>
        <end position="216"/>
    </location>
    <ligand>
        <name>GTP</name>
        <dbReference type="ChEBI" id="CHEBI:37565"/>
    </ligand>
</feature>
<feature type="binding site" evidence="1">
    <location>
        <begin position="293"/>
        <end position="296"/>
    </location>
    <ligand>
        <name>GTP</name>
        <dbReference type="ChEBI" id="CHEBI:37565"/>
    </ligand>
</feature>
<feature type="binding site" evidence="1">
    <location>
        <begin position="324"/>
        <end position="326"/>
    </location>
    <ligand>
        <name>GTP</name>
        <dbReference type="ChEBI" id="CHEBI:37565"/>
    </ligand>
</feature>
<organism>
    <name type="scientific">Xylella fastidiosa (strain M23)</name>
    <dbReference type="NCBI Taxonomy" id="405441"/>
    <lineage>
        <taxon>Bacteria</taxon>
        <taxon>Pseudomonadati</taxon>
        <taxon>Pseudomonadota</taxon>
        <taxon>Gammaproteobacteria</taxon>
        <taxon>Lysobacterales</taxon>
        <taxon>Lysobacteraceae</taxon>
        <taxon>Xylella</taxon>
    </lineage>
</organism>
<proteinExistence type="inferred from homology"/>
<protein>
    <recommendedName>
        <fullName evidence="1">GTPase Obg</fullName>
        <ecNumber evidence="1">3.6.5.-</ecNumber>
    </recommendedName>
    <alternativeName>
        <fullName evidence="1">GTP-binding protein Obg</fullName>
    </alternativeName>
</protein>
<dbReference type="EC" id="3.6.5.-" evidence="1"/>
<dbReference type="EMBL" id="CP001011">
    <property type="protein sequence ID" value="ACB92933.1"/>
    <property type="molecule type" value="Genomic_DNA"/>
</dbReference>
<dbReference type="SMR" id="B2I6V6"/>
<dbReference type="KEGG" id="xfn:XfasM23_1525"/>
<dbReference type="HOGENOM" id="CLU_011747_2_0_6"/>
<dbReference type="Proteomes" id="UP000001698">
    <property type="component" value="Chromosome"/>
</dbReference>
<dbReference type="GO" id="GO:0005737">
    <property type="term" value="C:cytoplasm"/>
    <property type="evidence" value="ECO:0007669"/>
    <property type="project" value="UniProtKB-SubCell"/>
</dbReference>
<dbReference type="GO" id="GO:0005525">
    <property type="term" value="F:GTP binding"/>
    <property type="evidence" value="ECO:0007669"/>
    <property type="project" value="UniProtKB-UniRule"/>
</dbReference>
<dbReference type="GO" id="GO:0003924">
    <property type="term" value="F:GTPase activity"/>
    <property type="evidence" value="ECO:0007669"/>
    <property type="project" value="UniProtKB-UniRule"/>
</dbReference>
<dbReference type="GO" id="GO:0000287">
    <property type="term" value="F:magnesium ion binding"/>
    <property type="evidence" value="ECO:0007669"/>
    <property type="project" value="InterPro"/>
</dbReference>
<dbReference type="GO" id="GO:0042254">
    <property type="term" value="P:ribosome biogenesis"/>
    <property type="evidence" value="ECO:0007669"/>
    <property type="project" value="UniProtKB-UniRule"/>
</dbReference>
<dbReference type="CDD" id="cd01898">
    <property type="entry name" value="Obg"/>
    <property type="match status" value="1"/>
</dbReference>
<dbReference type="FunFam" id="2.70.210.12:FF:000001">
    <property type="entry name" value="GTPase Obg"/>
    <property type="match status" value="1"/>
</dbReference>
<dbReference type="Gene3D" id="2.70.210.12">
    <property type="entry name" value="GTP1/OBG domain"/>
    <property type="match status" value="1"/>
</dbReference>
<dbReference type="Gene3D" id="3.40.50.300">
    <property type="entry name" value="P-loop containing nucleotide triphosphate hydrolases"/>
    <property type="match status" value="1"/>
</dbReference>
<dbReference type="HAMAP" id="MF_01454">
    <property type="entry name" value="GTPase_Obg"/>
    <property type="match status" value="1"/>
</dbReference>
<dbReference type="InterPro" id="IPR031167">
    <property type="entry name" value="G_OBG"/>
</dbReference>
<dbReference type="InterPro" id="IPR006073">
    <property type="entry name" value="GTP-bd"/>
</dbReference>
<dbReference type="InterPro" id="IPR014100">
    <property type="entry name" value="GTP-bd_Obg/CgtA"/>
</dbReference>
<dbReference type="InterPro" id="IPR006074">
    <property type="entry name" value="GTP1-OBG_CS"/>
</dbReference>
<dbReference type="InterPro" id="IPR006169">
    <property type="entry name" value="GTP1_OBG_dom"/>
</dbReference>
<dbReference type="InterPro" id="IPR036726">
    <property type="entry name" value="GTP1_OBG_dom_sf"/>
</dbReference>
<dbReference type="InterPro" id="IPR045086">
    <property type="entry name" value="OBG_GTPase"/>
</dbReference>
<dbReference type="InterPro" id="IPR027417">
    <property type="entry name" value="P-loop_NTPase"/>
</dbReference>
<dbReference type="NCBIfam" id="TIGR02729">
    <property type="entry name" value="Obg_CgtA"/>
    <property type="match status" value="1"/>
</dbReference>
<dbReference type="NCBIfam" id="NF008955">
    <property type="entry name" value="PRK12297.1"/>
    <property type="match status" value="1"/>
</dbReference>
<dbReference type="NCBIfam" id="NF008956">
    <property type="entry name" value="PRK12299.1"/>
    <property type="match status" value="1"/>
</dbReference>
<dbReference type="PANTHER" id="PTHR11702">
    <property type="entry name" value="DEVELOPMENTALLY REGULATED GTP-BINDING PROTEIN-RELATED"/>
    <property type="match status" value="1"/>
</dbReference>
<dbReference type="PANTHER" id="PTHR11702:SF31">
    <property type="entry name" value="MITOCHONDRIAL RIBOSOME-ASSOCIATED GTPASE 2"/>
    <property type="match status" value="1"/>
</dbReference>
<dbReference type="Pfam" id="PF01018">
    <property type="entry name" value="GTP1_OBG"/>
    <property type="match status" value="1"/>
</dbReference>
<dbReference type="Pfam" id="PF01926">
    <property type="entry name" value="MMR_HSR1"/>
    <property type="match status" value="1"/>
</dbReference>
<dbReference type="PIRSF" id="PIRSF002401">
    <property type="entry name" value="GTP_bd_Obg/CgtA"/>
    <property type="match status" value="1"/>
</dbReference>
<dbReference type="PRINTS" id="PR00326">
    <property type="entry name" value="GTP1OBG"/>
</dbReference>
<dbReference type="SUPFAM" id="SSF82051">
    <property type="entry name" value="Obg GTP-binding protein N-terminal domain"/>
    <property type="match status" value="1"/>
</dbReference>
<dbReference type="SUPFAM" id="SSF52540">
    <property type="entry name" value="P-loop containing nucleoside triphosphate hydrolases"/>
    <property type="match status" value="1"/>
</dbReference>
<dbReference type="PROSITE" id="PS51710">
    <property type="entry name" value="G_OBG"/>
    <property type="match status" value="1"/>
</dbReference>
<dbReference type="PROSITE" id="PS00905">
    <property type="entry name" value="GTP1_OBG"/>
    <property type="match status" value="1"/>
</dbReference>
<dbReference type="PROSITE" id="PS51883">
    <property type="entry name" value="OBG"/>
    <property type="match status" value="1"/>
</dbReference>
<accession>B2I6V6</accession>
<comment type="function">
    <text evidence="1">An essential GTPase which binds GTP, GDP and possibly (p)ppGpp with moderate affinity, with high nucleotide exchange rates and a fairly low GTP hydrolysis rate. Plays a role in control of the cell cycle, stress response, ribosome biogenesis and in those bacteria that undergo differentiation, in morphogenesis control.</text>
</comment>
<comment type="cofactor">
    <cofactor evidence="1">
        <name>Mg(2+)</name>
        <dbReference type="ChEBI" id="CHEBI:18420"/>
    </cofactor>
</comment>
<comment type="subunit">
    <text evidence="1">Monomer.</text>
</comment>
<comment type="subcellular location">
    <subcellularLocation>
        <location evidence="1">Cytoplasm</location>
    </subcellularLocation>
</comment>
<comment type="similarity">
    <text evidence="1">Belongs to the TRAFAC class OBG-HflX-like GTPase superfamily. OBG GTPase family.</text>
</comment>
<evidence type="ECO:0000255" key="1">
    <source>
        <dbReference type="HAMAP-Rule" id="MF_01454"/>
    </source>
</evidence>
<evidence type="ECO:0000255" key="2">
    <source>
        <dbReference type="PROSITE-ProRule" id="PRU01231"/>
    </source>
</evidence>
<keyword id="KW-0963">Cytoplasm</keyword>
<keyword id="KW-0342">GTP-binding</keyword>
<keyword id="KW-0378">Hydrolase</keyword>
<keyword id="KW-0460">Magnesium</keyword>
<keyword id="KW-0479">Metal-binding</keyword>
<keyword id="KW-0547">Nucleotide-binding</keyword>